<reference key="1">
    <citation type="journal article" date="1995" name="DNA Cell Biol.">
        <title>An essential gene pair in Saccharomyces cerevisiae with a potential role in mating.</title>
        <authorList>
            <person name="Yu Y."/>
            <person name="Hirsch J.P."/>
        </authorList>
    </citation>
    <scope>NUCLEOTIDE SEQUENCE [GENOMIC DNA]</scope>
</reference>
<reference key="2">
    <citation type="journal article" date="1997" name="Nature">
        <title>The nucleotide sequence of Saccharomyces cerevisiae chromosome IV.</title>
        <authorList>
            <person name="Jacq C."/>
            <person name="Alt-Moerbe J."/>
            <person name="Andre B."/>
            <person name="Arnold W."/>
            <person name="Bahr A."/>
            <person name="Ballesta J.P.G."/>
            <person name="Bargues M."/>
            <person name="Baron L."/>
            <person name="Becker A."/>
            <person name="Biteau N."/>
            <person name="Bloecker H."/>
            <person name="Blugeon C."/>
            <person name="Boskovic J."/>
            <person name="Brandt P."/>
            <person name="Brueckner M."/>
            <person name="Buitrago M.J."/>
            <person name="Coster F."/>
            <person name="Delaveau T."/>
            <person name="del Rey F."/>
            <person name="Dujon B."/>
            <person name="Eide L.G."/>
            <person name="Garcia-Cantalejo J.M."/>
            <person name="Goffeau A."/>
            <person name="Gomez-Peris A."/>
            <person name="Granotier C."/>
            <person name="Hanemann V."/>
            <person name="Hankeln T."/>
            <person name="Hoheisel J.D."/>
            <person name="Jaeger W."/>
            <person name="Jimenez A."/>
            <person name="Jonniaux J.-L."/>
            <person name="Kraemer C."/>
            <person name="Kuester H."/>
            <person name="Laamanen P."/>
            <person name="Legros Y."/>
            <person name="Louis E.J."/>
            <person name="Moeller-Rieker S."/>
            <person name="Monnet A."/>
            <person name="Moro M."/>
            <person name="Mueller-Auer S."/>
            <person name="Nussbaumer B."/>
            <person name="Paricio N."/>
            <person name="Paulin L."/>
            <person name="Perea J."/>
            <person name="Perez-Alonso M."/>
            <person name="Perez-Ortin J.E."/>
            <person name="Pohl T.M."/>
            <person name="Prydz H."/>
            <person name="Purnelle B."/>
            <person name="Rasmussen S.W."/>
            <person name="Remacha M.A."/>
            <person name="Revuelta J.L."/>
            <person name="Rieger M."/>
            <person name="Salom D."/>
            <person name="Saluz H.P."/>
            <person name="Saiz J.E."/>
            <person name="Saren A.-M."/>
            <person name="Schaefer M."/>
            <person name="Scharfe M."/>
            <person name="Schmidt E.R."/>
            <person name="Schneider C."/>
            <person name="Scholler P."/>
            <person name="Schwarz S."/>
            <person name="Soler-Mira A."/>
            <person name="Urrestarazu L.A."/>
            <person name="Verhasselt P."/>
            <person name="Vissers S."/>
            <person name="Voet M."/>
            <person name="Volckaert G."/>
            <person name="Wagner G."/>
            <person name="Wambutt R."/>
            <person name="Wedler E."/>
            <person name="Wedler H."/>
            <person name="Woelfl S."/>
            <person name="Harris D.E."/>
            <person name="Bowman S."/>
            <person name="Brown D."/>
            <person name="Churcher C.M."/>
            <person name="Connor R."/>
            <person name="Dedman K."/>
            <person name="Gentles S."/>
            <person name="Hamlin N."/>
            <person name="Hunt S."/>
            <person name="Jones L."/>
            <person name="McDonald S."/>
            <person name="Murphy L.D."/>
            <person name="Niblett D."/>
            <person name="Odell C."/>
            <person name="Oliver K."/>
            <person name="Rajandream M.A."/>
            <person name="Richards C."/>
            <person name="Shore L."/>
            <person name="Walsh S.V."/>
            <person name="Barrell B.G."/>
            <person name="Dietrich F.S."/>
            <person name="Mulligan J.T."/>
            <person name="Allen E."/>
            <person name="Araujo R."/>
            <person name="Aviles E."/>
            <person name="Berno A."/>
            <person name="Carpenter J."/>
            <person name="Chen E."/>
            <person name="Cherry J.M."/>
            <person name="Chung E."/>
            <person name="Duncan M."/>
            <person name="Hunicke-Smith S."/>
            <person name="Hyman R.W."/>
            <person name="Komp C."/>
            <person name="Lashkari D."/>
            <person name="Lew H."/>
            <person name="Lin D."/>
            <person name="Mosedale D."/>
            <person name="Nakahara K."/>
            <person name="Namath A."/>
            <person name="Oefner P."/>
            <person name="Oh C."/>
            <person name="Petel F.X."/>
            <person name="Roberts D."/>
            <person name="Schramm S."/>
            <person name="Schroeder M."/>
            <person name="Shogren T."/>
            <person name="Shroff N."/>
            <person name="Winant A."/>
            <person name="Yelton M.A."/>
            <person name="Botstein D."/>
            <person name="Davis R.W."/>
            <person name="Johnston M."/>
            <person name="Andrews S."/>
            <person name="Brinkman R."/>
            <person name="Cooper J."/>
            <person name="Ding H."/>
            <person name="Du Z."/>
            <person name="Favello A."/>
            <person name="Fulton L."/>
            <person name="Gattung S."/>
            <person name="Greco T."/>
            <person name="Hallsworth K."/>
            <person name="Hawkins J."/>
            <person name="Hillier L.W."/>
            <person name="Jier M."/>
            <person name="Johnson D."/>
            <person name="Johnston L."/>
            <person name="Kirsten J."/>
            <person name="Kucaba T."/>
            <person name="Langston Y."/>
            <person name="Latreille P."/>
            <person name="Le T."/>
            <person name="Mardis E."/>
            <person name="Menezes S."/>
            <person name="Miller N."/>
            <person name="Nhan M."/>
            <person name="Pauley A."/>
            <person name="Peluso D."/>
            <person name="Rifkin L."/>
            <person name="Riles L."/>
            <person name="Taich A."/>
            <person name="Trevaskis E."/>
            <person name="Vignati D."/>
            <person name="Wilcox L."/>
            <person name="Wohldman P."/>
            <person name="Vaudin M."/>
            <person name="Wilson R."/>
            <person name="Waterston R."/>
            <person name="Albermann K."/>
            <person name="Hani J."/>
            <person name="Heumann K."/>
            <person name="Kleine K."/>
            <person name="Mewes H.-W."/>
            <person name="Zollner A."/>
            <person name="Zaccaria P."/>
        </authorList>
    </citation>
    <scope>NUCLEOTIDE SEQUENCE [LARGE SCALE GENOMIC DNA]</scope>
    <source>
        <strain>ATCC 204508 / S288c</strain>
    </source>
</reference>
<reference key="3">
    <citation type="journal article" date="2014" name="G3 (Bethesda)">
        <title>The reference genome sequence of Saccharomyces cerevisiae: Then and now.</title>
        <authorList>
            <person name="Engel S.R."/>
            <person name="Dietrich F.S."/>
            <person name="Fisk D.G."/>
            <person name="Binkley G."/>
            <person name="Balakrishnan R."/>
            <person name="Costanzo M.C."/>
            <person name="Dwight S.S."/>
            <person name="Hitz B.C."/>
            <person name="Karra K."/>
            <person name="Nash R.S."/>
            <person name="Weng S."/>
            <person name="Wong E.D."/>
            <person name="Lloyd P."/>
            <person name="Skrzypek M.S."/>
            <person name="Miyasato S.R."/>
            <person name="Simison M."/>
            <person name="Cherry J.M."/>
        </authorList>
    </citation>
    <scope>GENOME REANNOTATION</scope>
    <source>
        <strain>ATCC 204508 / S288c</strain>
    </source>
</reference>
<reference key="4">
    <citation type="journal article" date="1998" name="Genetics">
        <title>A nucleolar protein that affects mating efficiency in Saccharomyces cerevisiae by altering the morphological response to pheromone.</title>
        <authorList>
            <person name="Kim J."/>
            <person name="Hirsch J.P."/>
        </authorList>
    </citation>
    <scope>SUBCELLULAR LOCATION</scope>
</reference>
<reference key="5">
    <citation type="journal article" date="2003" name="FEMS Yeast Res.">
        <title>Functional analysis in yeast of the Brix protein superfamily involved in the biogenesis of ribosomes.</title>
        <authorList>
            <person name="Bogengruber E."/>
            <person name="Briza P."/>
            <person name="Doppler E."/>
            <person name="Wimmer H."/>
            <person name="Koller L."/>
            <person name="Fasiolo F."/>
            <person name="Senger B."/>
            <person name="Hegemann J.H."/>
            <person name="Breitenbach M."/>
        </authorList>
    </citation>
    <scope>FUNCTION</scope>
</reference>
<reference key="6">
    <citation type="journal article" date="2003" name="Nature">
        <title>Global analysis of protein expression in yeast.</title>
        <authorList>
            <person name="Ghaemmaghami S."/>
            <person name="Huh W.-K."/>
            <person name="Bower K."/>
            <person name="Howson R.W."/>
            <person name="Belle A."/>
            <person name="Dephoure N."/>
            <person name="O'Shea E.K."/>
            <person name="Weissman J.S."/>
        </authorList>
    </citation>
    <scope>LEVEL OF PROTEIN EXPRESSION [LARGE SCALE ANALYSIS]</scope>
</reference>
<dbReference type="EMBL" id="U18114">
    <property type="protein sequence ID" value="AAA79981.1"/>
    <property type="molecule type" value="Genomic_DNA"/>
</dbReference>
<dbReference type="EMBL" id="U28374">
    <property type="protein sequence ID" value="AAB64748.1"/>
    <property type="molecule type" value="Genomic_DNA"/>
</dbReference>
<dbReference type="EMBL" id="BK006938">
    <property type="protein sequence ID" value="DAA12151.1"/>
    <property type="molecule type" value="Genomic_DNA"/>
</dbReference>
<dbReference type="PIR" id="S50248">
    <property type="entry name" value="S50248"/>
</dbReference>
<dbReference type="RefSeq" id="NP_010598.3">
    <property type="nucleotide sequence ID" value="NM_001180620.3"/>
</dbReference>
<dbReference type="SMR" id="Q12153"/>
<dbReference type="BioGRID" id="32365">
    <property type="interactions" value="120"/>
</dbReference>
<dbReference type="DIP" id="DIP-6502N"/>
<dbReference type="FunCoup" id="Q12153">
    <property type="interactions" value="870"/>
</dbReference>
<dbReference type="IntAct" id="Q12153">
    <property type="interactions" value="28"/>
</dbReference>
<dbReference type="MINT" id="Q12153"/>
<dbReference type="STRING" id="4932.YDR312W"/>
<dbReference type="GlyGen" id="Q12153">
    <property type="glycosylation" value="1 site"/>
</dbReference>
<dbReference type="iPTMnet" id="Q12153"/>
<dbReference type="PaxDb" id="4932-YDR312W"/>
<dbReference type="PeptideAtlas" id="Q12153"/>
<dbReference type="EnsemblFungi" id="YDR312W_mRNA">
    <property type="protein sequence ID" value="YDR312W"/>
    <property type="gene ID" value="YDR312W"/>
</dbReference>
<dbReference type="GeneID" id="851907"/>
<dbReference type="KEGG" id="sce:YDR312W"/>
<dbReference type="AGR" id="SGD:S000002720"/>
<dbReference type="SGD" id="S000002720">
    <property type="gene designation" value="SSF2"/>
</dbReference>
<dbReference type="VEuPathDB" id="FungiDB:YDR312W"/>
<dbReference type="eggNOG" id="KOG2963">
    <property type="taxonomic scope" value="Eukaryota"/>
</dbReference>
<dbReference type="GeneTree" id="ENSGT00530000064158"/>
<dbReference type="HOGENOM" id="CLU_026936_2_0_1"/>
<dbReference type="InParanoid" id="Q12153"/>
<dbReference type="OMA" id="KRTHAQI"/>
<dbReference type="OrthoDB" id="10261452at2759"/>
<dbReference type="BioCyc" id="YEAST:G3O-29871-MONOMER"/>
<dbReference type="BioGRID-ORCS" id="851907">
    <property type="hits" value="0 hits in 10 CRISPR screens"/>
</dbReference>
<dbReference type="PRO" id="PR:Q12153"/>
<dbReference type="Proteomes" id="UP000002311">
    <property type="component" value="Chromosome IV"/>
</dbReference>
<dbReference type="RNAct" id="Q12153">
    <property type="molecule type" value="protein"/>
</dbReference>
<dbReference type="GO" id="GO:0005730">
    <property type="term" value="C:nucleolus"/>
    <property type="evidence" value="ECO:0000314"/>
    <property type="project" value="SGD"/>
</dbReference>
<dbReference type="GO" id="GO:0030687">
    <property type="term" value="C:preribosome, large subunit precursor"/>
    <property type="evidence" value="ECO:0000318"/>
    <property type="project" value="GO_Central"/>
</dbReference>
<dbReference type="GO" id="GO:0019843">
    <property type="term" value="F:rRNA binding"/>
    <property type="evidence" value="ECO:0000314"/>
    <property type="project" value="SGD"/>
</dbReference>
<dbReference type="GO" id="GO:0000463">
    <property type="term" value="P:maturation of LSU-rRNA from tricistronic rRNA transcript (SSU-rRNA, 5.8S rRNA, LSU-rRNA)"/>
    <property type="evidence" value="ECO:0000318"/>
    <property type="project" value="GO_Central"/>
</dbReference>
<dbReference type="GO" id="GO:0000027">
    <property type="term" value="P:ribosomal large subunit assembly"/>
    <property type="evidence" value="ECO:0000315"/>
    <property type="project" value="SGD"/>
</dbReference>
<dbReference type="InterPro" id="IPR007109">
    <property type="entry name" value="Brix"/>
</dbReference>
<dbReference type="InterPro" id="IPR045112">
    <property type="entry name" value="PPAN-like"/>
</dbReference>
<dbReference type="PANTHER" id="PTHR12661">
    <property type="entry name" value="PETER PAN-RELATED"/>
    <property type="match status" value="1"/>
</dbReference>
<dbReference type="PANTHER" id="PTHR12661:SF5">
    <property type="entry name" value="SUPPRESSOR OF SWI4 1 HOMOLOG"/>
    <property type="match status" value="1"/>
</dbReference>
<dbReference type="Pfam" id="PF04427">
    <property type="entry name" value="Brix"/>
    <property type="match status" value="1"/>
</dbReference>
<dbReference type="SMART" id="SM00879">
    <property type="entry name" value="Brix"/>
    <property type="match status" value="1"/>
</dbReference>
<dbReference type="PROSITE" id="PS50833">
    <property type="entry name" value="BRIX"/>
    <property type="match status" value="1"/>
</dbReference>
<feature type="chain" id="PRO_0000120260" description="Ribosome biogenesis protein SSF2">
    <location>
        <begin position="1"/>
        <end position="453"/>
    </location>
</feature>
<feature type="domain" description="Brix" evidence="1">
    <location>
        <begin position="26"/>
        <end position="348"/>
    </location>
</feature>
<feature type="region of interest" description="Disordered" evidence="2">
    <location>
        <begin position="1"/>
        <end position="22"/>
    </location>
</feature>
<feature type="region of interest" description="Disordered" evidence="2">
    <location>
        <begin position="275"/>
        <end position="327"/>
    </location>
</feature>
<feature type="region of interest" description="Disordered" evidence="2">
    <location>
        <begin position="373"/>
        <end position="453"/>
    </location>
</feature>
<feature type="compositionally biased region" description="Basic residues" evidence="2">
    <location>
        <begin position="1"/>
        <end position="11"/>
    </location>
</feature>
<feature type="compositionally biased region" description="Basic and acidic residues" evidence="2">
    <location>
        <begin position="373"/>
        <end position="398"/>
    </location>
</feature>
<feature type="compositionally biased region" description="Basic residues" evidence="2">
    <location>
        <begin position="399"/>
        <end position="409"/>
    </location>
</feature>
<feature type="compositionally biased region" description="Acidic residues" evidence="2">
    <location>
        <begin position="440"/>
        <end position="453"/>
    </location>
</feature>
<sequence length="453" mass="51856">MAKRRQKKRTHAQITPEQERDIPKSMVIRVGQTSLANHSLNQLVKDFRQIMQPHTAVKLKERKSNKLKDFVVMCGPLGVTHLFMFTQSEKTGNVSLKIARTPQGPTVTFQVLDYSLGRDIKKFLKRPKSLNNDDVLNPPLLVLNGFSTSKRSDEDDQDVNVEKVIVSMFQNIFPPLNPARTSLNSIKRIFMINKDRETGEISMRHYFIDIREVEISRNLKRLYKAKNNLSKTVPNLHRKEDISSLILDHDLGAYTSESEIEDDAIVRVVDNQDVKAKHSQTSLSQKTPVKMTDNEEREKGIEEEDVEMEEPKPSENSQPTPRKKAIKLTELGPRLTLKLVKIEDGICSGKVLHHEFVQKSSEEIKALEKRHAAKMRLKEQRRKEQEENIAKKKAVKDAKKQRKLERRKARAEEQGEGQGKDGAMSDDGSSSSEDEHYSDVPEDLDSDLFSEVE</sequence>
<keyword id="KW-0539">Nucleus</keyword>
<keyword id="KW-1185">Reference proteome</keyword>
<keyword id="KW-0690">Ribosome biogenesis</keyword>
<evidence type="ECO:0000255" key="1">
    <source>
        <dbReference type="PROSITE-ProRule" id="PRU00034"/>
    </source>
</evidence>
<evidence type="ECO:0000256" key="2">
    <source>
        <dbReference type="SAM" id="MobiDB-lite"/>
    </source>
</evidence>
<evidence type="ECO:0000269" key="3">
    <source>
    </source>
</evidence>
<evidence type="ECO:0000269" key="4">
    <source>
    </source>
</evidence>
<evidence type="ECO:0000269" key="5">
    <source>
    </source>
</evidence>
<name>SSF2_YEAST</name>
<protein>
    <recommendedName>
        <fullName>Ribosome biogenesis protein SSF2</fullName>
    </recommendedName>
</protein>
<comment type="function">
    <text evidence="3">Required for biogenesis of the 60S ribosomal subunit.</text>
</comment>
<comment type="subunit">
    <text>Part of a complex that includes BRX1, RPF1, RPF2 and SSF1 or SSF2.</text>
</comment>
<comment type="interaction">
    <interactant intactId="EBI-18168">
        <id>Q12153</id>
    </interactant>
    <interactant intactId="EBI-34602">
        <id>Q06511</id>
        <label>RRP15</label>
    </interactant>
    <organismsDiffer>false</organismsDiffer>
    <experiments>6</experiments>
</comment>
<comment type="subcellular location">
    <subcellularLocation>
        <location evidence="5">Nucleus</location>
        <location evidence="5">Nucleolus</location>
    </subcellularLocation>
</comment>
<comment type="miscellaneous">
    <text evidence="4">Present with 1350 molecules/cell in log phase SD medium.</text>
</comment>
<proteinExistence type="evidence at protein level"/>
<organism>
    <name type="scientific">Saccharomyces cerevisiae (strain ATCC 204508 / S288c)</name>
    <name type="common">Baker's yeast</name>
    <dbReference type="NCBI Taxonomy" id="559292"/>
    <lineage>
        <taxon>Eukaryota</taxon>
        <taxon>Fungi</taxon>
        <taxon>Dikarya</taxon>
        <taxon>Ascomycota</taxon>
        <taxon>Saccharomycotina</taxon>
        <taxon>Saccharomycetes</taxon>
        <taxon>Saccharomycetales</taxon>
        <taxon>Saccharomycetaceae</taxon>
        <taxon>Saccharomyces</taxon>
    </lineage>
</organism>
<accession>Q12153</accession>
<accession>D6VSU1</accession>
<gene>
    <name type="primary">SSF2</name>
    <name type="ordered locus">YDR312W</name>
    <name type="ORF">D9740.2</name>
</gene>